<name>KDPB_ECOLC</name>
<sequence>MSRKQLALFEPTLVVQALKEAVKKLNPQAQWRNPVMFIVWIGSLLTTCISIAMASGAMPGNALFSAAISGWLWITVLFANFAEALAEGRSKAQANSLKGVKKTAFARKLREPKYGAVADKVPADQLRKGDIVLVEAGDIIPCDGEVIEGGASVDESAITGESAPVIRESGGDFASVTGGTRILSDWLVIECSVNPGETFLDRMIAMVEGAQRRKTPNEIALTILLIALTIVFLLATATLWPFSAWGGNAVSVTVLVALLVCLIPTTIGGLLSAIGVAGMSRMLGANVIATSGRAVEAAGDVDVLLLDKTGTITLGNRQASEFIPAQGVDEKTLADAAQLASLADETPEGRSIVILAKQRFNLRERDVQSLHATFVPFTAQSRMSGINIDNRMIRKGSVDAIRRHVEANGGHFPTDVDQKVDQVARQGATPLVVVEGSRVLGVIALKDIVKGGIKERFAQLRKMGIKTVMITGDNRLTAAAIAAEAGVDDFLAEATPEAKLALIRQYQAEGRLVAMTGDGTNDAPALAQADVAVAMNSGTQAAKEAGNMVDLDSNPTKLIEVVHIGKQMLMTRGSLTTFSIANDVAKYFAIIPAAFAATYPQLNALNIMCLHSPDSAILSAVIFNALIIVFLIPLALKGVSYKPLTASAMLRRNLWIYGLGGLLVPFIGIKVIDLLLTVCSLV</sequence>
<feature type="chain" id="PRO_1000078862" description="Potassium-transporting ATPase ATP-binding subunit">
    <location>
        <begin position="1"/>
        <end position="682"/>
    </location>
</feature>
<feature type="transmembrane region" description="Helical" evidence="1">
    <location>
        <begin position="34"/>
        <end position="54"/>
    </location>
</feature>
<feature type="transmembrane region" description="Helical" evidence="1">
    <location>
        <begin position="62"/>
        <end position="82"/>
    </location>
</feature>
<feature type="transmembrane region" description="Helical" evidence="1">
    <location>
        <begin position="219"/>
        <end position="239"/>
    </location>
</feature>
<feature type="transmembrane region" description="Helical" evidence="1">
    <location>
        <begin position="254"/>
        <end position="274"/>
    </location>
</feature>
<feature type="transmembrane region" description="Helical" evidence="1">
    <location>
        <begin position="588"/>
        <end position="608"/>
    </location>
</feature>
<feature type="transmembrane region" description="Helical" evidence="1">
    <location>
        <begin position="616"/>
        <end position="636"/>
    </location>
</feature>
<feature type="transmembrane region" description="Helical" evidence="1">
    <location>
        <begin position="656"/>
        <end position="676"/>
    </location>
</feature>
<feature type="active site" description="4-aspartylphosphate intermediate" evidence="1">
    <location>
        <position position="307"/>
    </location>
</feature>
<feature type="binding site" evidence="1">
    <location>
        <position position="344"/>
    </location>
    <ligand>
        <name>ATP</name>
        <dbReference type="ChEBI" id="CHEBI:30616"/>
    </ligand>
</feature>
<feature type="binding site" evidence="1">
    <location>
        <position position="348"/>
    </location>
    <ligand>
        <name>ATP</name>
        <dbReference type="ChEBI" id="CHEBI:30616"/>
    </ligand>
</feature>
<feature type="binding site" evidence="1">
    <location>
        <begin position="377"/>
        <end position="384"/>
    </location>
    <ligand>
        <name>ATP</name>
        <dbReference type="ChEBI" id="CHEBI:30616"/>
    </ligand>
</feature>
<feature type="binding site" evidence="1">
    <location>
        <position position="395"/>
    </location>
    <ligand>
        <name>ATP</name>
        <dbReference type="ChEBI" id="CHEBI:30616"/>
    </ligand>
</feature>
<feature type="binding site" evidence="1">
    <location>
        <position position="518"/>
    </location>
    <ligand>
        <name>Mg(2+)</name>
        <dbReference type="ChEBI" id="CHEBI:18420"/>
    </ligand>
</feature>
<feature type="binding site" evidence="1">
    <location>
        <position position="522"/>
    </location>
    <ligand>
        <name>Mg(2+)</name>
        <dbReference type="ChEBI" id="CHEBI:18420"/>
    </ligand>
</feature>
<proteinExistence type="inferred from homology"/>
<protein>
    <recommendedName>
        <fullName evidence="1">Potassium-transporting ATPase ATP-binding subunit</fullName>
        <ecNumber evidence="1">7.2.2.6</ecNumber>
    </recommendedName>
    <alternativeName>
        <fullName evidence="1">ATP phosphohydrolase [potassium-transporting] B chain</fullName>
    </alternativeName>
    <alternativeName>
        <fullName evidence="1">Potassium-binding and translocating subunit B</fullName>
    </alternativeName>
    <alternativeName>
        <fullName evidence="1">Potassium-translocating ATPase B chain</fullName>
    </alternativeName>
</protein>
<evidence type="ECO:0000255" key="1">
    <source>
        <dbReference type="HAMAP-Rule" id="MF_00285"/>
    </source>
</evidence>
<gene>
    <name evidence="1" type="primary">kdpB</name>
    <name type="ordered locus">EcolC_2959</name>
</gene>
<dbReference type="EC" id="7.2.2.6" evidence="1"/>
<dbReference type="EMBL" id="CP000946">
    <property type="protein sequence ID" value="ACA78585.1"/>
    <property type="molecule type" value="Genomic_DNA"/>
</dbReference>
<dbReference type="RefSeq" id="WP_000087948.1">
    <property type="nucleotide sequence ID" value="NZ_MTFT01000005.1"/>
</dbReference>
<dbReference type="BMRB" id="B1IY32"/>
<dbReference type="SMR" id="B1IY32"/>
<dbReference type="KEGG" id="ecl:EcolC_2959"/>
<dbReference type="HOGENOM" id="CLU_025728_2_0_6"/>
<dbReference type="GO" id="GO:0005886">
    <property type="term" value="C:plasma membrane"/>
    <property type="evidence" value="ECO:0007669"/>
    <property type="project" value="UniProtKB-SubCell"/>
</dbReference>
<dbReference type="GO" id="GO:0005524">
    <property type="term" value="F:ATP binding"/>
    <property type="evidence" value="ECO:0007669"/>
    <property type="project" value="UniProtKB-UniRule"/>
</dbReference>
<dbReference type="GO" id="GO:0016887">
    <property type="term" value="F:ATP hydrolysis activity"/>
    <property type="evidence" value="ECO:0007669"/>
    <property type="project" value="InterPro"/>
</dbReference>
<dbReference type="GO" id="GO:0000287">
    <property type="term" value="F:magnesium ion binding"/>
    <property type="evidence" value="ECO:0007669"/>
    <property type="project" value="UniProtKB-UniRule"/>
</dbReference>
<dbReference type="GO" id="GO:0008556">
    <property type="term" value="F:P-type potassium transmembrane transporter activity"/>
    <property type="evidence" value="ECO:0007669"/>
    <property type="project" value="UniProtKB-UniRule"/>
</dbReference>
<dbReference type="CDD" id="cd02078">
    <property type="entry name" value="P-type_ATPase_K"/>
    <property type="match status" value="1"/>
</dbReference>
<dbReference type="FunFam" id="2.70.150.10:FF:000010">
    <property type="entry name" value="Potassium-transporting ATPase ATP-binding subunit"/>
    <property type="match status" value="1"/>
</dbReference>
<dbReference type="FunFam" id="3.40.1110.10:FF:000007">
    <property type="entry name" value="Potassium-transporting ATPase ATP-binding subunit"/>
    <property type="match status" value="1"/>
</dbReference>
<dbReference type="Gene3D" id="3.40.1110.10">
    <property type="entry name" value="Calcium-transporting ATPase, cytoplasmic domain N"/>
    <property type="match status" value="1"/>
</dbReference>
<dbReference type="Gene3D" id="2.70.150.10">
    <property type="entry name" value="Calcium-transporting ATPase, cytoplasmic transduction domain A"/>
    <property type="match status" value="1"/>
</dbReference>
<dbReference type="Gene3D" id="3.40.50.1000">
    <property type="entry name" value="HAD superfamily/HAD-like"/>
    <property type="match status" value="1"/>
</dbReference>
<dbReference type="HAMAP" id="MF_00285">
    <property type="entry name" value="KdpB"/>
    <property type="match status" value="1"/>
</dbReference>
<dbReference type="InterPro" id="IPR023299">
    <property type="entry name" value="ATPase_P-typ_cyto_dom_N"/>
</dbReference>
<dbReference type="InterPro" id="IPR018303">
    <property type="entry name" value="ATPase_P-typ_P_site"/>
</dbReference>
<dbReference type="InterPro" id="IPR023298">
    <property type="entry name" value="ATPase_P-typ_TM_dom_sf"/>
</dbReference>
<dbReference type="InterPro" id="IPR008250">
    <property type="entry name" value="ATPase_P-typ_transduc_dom_A_sf"/>
</dbReference>
<dbReference type="InterPro" id="IPR036412">
    <property type="entry name" value="HAD-like_sf"/>
</dbReference>
<dbReference type="InterPro" id="IPR023214">
    <property type="entry name" value="HAD_sf"/>
</dbReference>
<dbReference type="InterPro" id="IPR006391">
    <property type="entry name" value="P-type_ATPase_bsu_IA"/>
</dbReference>
<dbReference type="InterPro" id="IPR001757">
    <property type="entry name" value="P_typ_ATPase"/>
</dbReference>
<dbReference type="InterPro" id="IPR044492">
    <property type="entry name" value="P_typ_ATPase_HD_dom"/>
</dbReference>
<dbReference type="NCBIfam" id="TIGR01494">
    <property type="entry name" value="ATPase_P-type"/>
    <property type="match status" value="2"/>
</dbReference>
<dbReference type="NCBIfam" id="TIGR01497">
    <property type="entry name" value="kdpB"/>
    <property type="match status" value="1"/>
</dbReference>
<dbReference type="PANTHER" id="PTHR43743">
    <property type="entry name" value="POTASSIUM-TRANSPORTING ATPASE ATP-BINDING SUBUNIT"/>
    <property type="match status" value="1"/>
</dbReference>
<dbReference type="PANTHER" id="PTHR43743:SF1">
    <property type="entry name" value="POTASSIUM-TRANSPORTING ATPASE ATP-BINDING SUBUNIT"/>
    <property type="match status" value="1"/>
</dbReference>
<dbReference type="Pfam" id="PF00122">
    <property type="entry name" value="E1-E2_ATPase"/>
    <property type="match status" value="1"/>
</dbReference>
<dbReference type="Pfam" id="PF00702">
    <property type="entry name" value="Hydrolase"/>
    <property type="match status" value="1"/>
</dbReference>
<dbReference type="PRINTS" id="PR00119">
    <property type="entry name" value="CATATPASE"/>
</dbReference>
<dbReference type="SFLD" id="SFLDG00002">
    <property type="entry name" value="C1.7:_P-type_atpase_like"/>
    <property type="match status" value="1"/>
</dbReference>
<dbReference type="SFLD" id="SFLDF00027">
    <property type="entry name" value="p-type_atpase"/>
    <property type="match status" value="1"/>
</dbReference>
<dbReference type="SUPFAM" id="SSF81653">
    <property type="entry name" value="Calcium ATPase, transduction domain A"/>
    <property type="match status" value="1"/>
</dbReference>
<dbReference type="SUPFAM" id="SSF81665">
    <property type="entry name" value="Calcium ATPase, transmembrane domain M"/>
    <property type="match status" value="1"/>
</dbReference>
<dbReference type="SUPFAM" id="SSF56784">
    <property type="entry name" value="HAD-like"/>
    <property type="match status" value="1"/>
</dbReference>
<dbReference type="SUPFAM" id="SSF81660">
    <property type="entry name" value="Metal cation-transporting ATPase, ATP-binding domain N"/>
    <property type="match status" value="1"/>
</dbReference>
<dbReference type="PROSITE" id="PS00154">
    <property type="entry name" value="ATPASE_E1_E2"/>
    <property type="match status" value="1"/>
</dbReference>
<organism>
    <name type="scientific">Escherichia coli (strain ATCC 8739 / DSM 1576 / NBRC 3972 / NCIMB 8545 / WDCM 00012 / Crooks)</name>
    <dbReference type="NCBI Taxonomy" id="481805"/>
    <lineage>
        <taxon>Bacteria</taxon>
        <taxon>Pseudomonadati</taxon>
        <taxon>Pseudomonadota</taxon>
        <taxon>Gammaproteobacteria</taxon>
        <taxon>Enterobacterales</taxon>
        <taxon>Enterobacteriaceae</taxon>
        <taxon>Escherichia</taxon>
    </lineage>
</organism>
<accession>B1IY32</accession>
<comment type="function">
    <text evidence="1">Part of the high-affinity ATP-driven potassium transport (or Kdp) system, which catalyzes the hydrolysis of ATP coupled with the electrogenic transport of potassium into the cytoplasm. This subunit is responsible for energy coupling to the transport system and for the release of the potassium ions to the cytoplasm.</text>
</comment>
<comment type="catalytic activity">
    <reaction evidence="1">
        <text>K(+)(out) + ATP + H2O = K(+)(in) + ADP + phosphate + H(+)</text>
        <dbReference type="Rhea" id="RHEA:16777"/>
        <dbReference type="ChEBI" id="CHEBI:15377"/>
        <dbReference type="ChEBI" id="CHEBI:15378"/>
        <dbReference type="ChEBI" id="CHEBI:29103"/>
        <dbReference type="ChEBI" id="CHEBI:30616"/>
        <dbReference type="ChEBI" id="CHEBI:43474"/>
        <dbReference type="ChEBI" id="CHEBI:456216"/>
        <dbReference type="EC" id="7.2.2.6"/>
    </reaction>
    <physiologicalReaction direction="left-to-right" evidence="1">
        <dbReference type="Rhea" id="RHEA:16778"/>
    </physiologicalReaction>
</comment>
<comment type="subunit">
    <text evidence="1">The system is composed of three essential subunits: KdpA, KdpB and KdpC.</text>
</comment>
<comment type="subcellular location">
    <subcellularLocation>
        <location evidence="1">Cell inner membrane</location>
        <topology evidence="1">Multi-pass membrane protein</topology>
    </subcellularLocation>
</comment>
<comment type="similarity">
    <text evidence="1">Belongs to the cation transport ATPase (P-type) (TC 3.A.3) family. Type IA subfamily.</text>
</comment>
<reference key="1">
    <citation type="submission" date="2008-02" db="EMBL/GenBank/DDBJ databases">
        <title>Complete sequence of Escherichia coli C str. ATCC 8739.</title>
        <authorList>
            <person name="Copeland A."/>
            <person name="Lucas S."/>
            <person name="Lapidus A."/>
            <person name="Glavina del Rio T."/>
            <person name="Dalin E."/>
            <person name="Tice H."/>
            <person name="Bruce D."/>
            <person name="Goodwin L."/>
            <person name="Pitluck S."/>
            <person name="Kiss H."/>
            <person name="Brettin T."/>
            <person name="Detter J.C."/>
            <person name="Han C."/>
            <person name="Kuske C.R."/>
            <person name="Schmutz J."/>
            <person name="Larimer F."/>
            <person name="Land M."/>
            <person name="Hauser L."/>
            <person name="Kyrpides N."/>
            <person name="Mikhailova N."/>
            <person name="Ingram L."/>
            <person name="Richardson P."/>
        </authorList>
    </citation>
    <scope>NUCLEOTIDE SEQUENCE [LARGE SCALE GENOMIC DNA]</scope>
    <source>
        <strain>ATCC 8739 / DSM 1576 / NBRC 3972 / NCIMB 8545 / WDCM 00012 / Crooks</strain>
    </source>
</reference>
<keyword id="KW-0067">ATP-binding</keyword>
<keyword id="KW-0997">Cell inner membrane</keyword>
<keyword id="KW-1003">Cell membrane</keyword>
<keyword id="KW-0406">Ion transport</keyword>
<keyword id="KW-0460">Magnesium</keyword>
<keyword id="KW-0472">Membrane</keyword>
<keyword id="KW-0479">Metal-binding</keyword>
<keyword id="KW-0547">Nucleotide-binding</keyword>
<keyword id="KW-0597">Phosphoprotein</keyword>
<keyword id="KW-0630">Potassium</keyword>
<keyword id="KW-0633">Potassium transport</keyword>
<keyword id="KW-1278">Translocase</keyword>
<keyword id="KW-0812">Transmembrane</keyword>
<keyword id="KW-1133">Transmembrane helix</keyword>
<keyword id="KW-0813">Transport</keyword>